<accession>A8Z5J0</accession>
<organism>
    <name type="scientific">Staphylococcus aureus (strain USA300 / TCH1516)</name>
    <dbReference type="NCBI Taxonomy" id="451516"/>
    <lineage>
        <taxon>Bacteria</taxon>
        <taxon>Bacillati</taxon>
        <taxon>Bacillota</taxon>
        <taxon>Bacilli</taxon>
        <taxon>Bacillales</taxon>
        <taxon>Staphylococcaceae</taxon>
        <taxon>Staphylococcus</taxon>
    </lineage>
</organism>
<gene>
    <name evidence="1" type="primary">trhO</name>
    <name type="ordered locus">USA300HOU_2691</name>
</gene>
<protein>
    <recommendedName>
        <fullName evidence="1">tRNA uridine(34) hydroxylase</fullName>
        <ecNumber evidence="1">1.14.-.-</ecNumber>
    </recommendedName>
    <alternativeName>
        <fullName evidence="1">tRNA hydroxylation protein O</fullName>
    </alternativeName>
</protein>
<reference key="1">
    <citation type="journal article" date="2007" name="BMC Microbiol.">
        <title>Subtle genetic changes enhance virulence of methicillin resistant and sensitive Staphylococcus aureus.</title>
        <authorList>
            <person name="Highlander S.K."/>
            <person name="Hulten K.G."/>
            <person name="Qin X."/>
            <person name="Jiang H."/>
            <person name="Yerrapragada S."/>
            <person name="Mason E.O. Jr."/>
            <person name="Shang Y."/>
            <person name="Williams T.M."/>
            <person name="Fortunov R.M."/>
            <person name="Liu Y."/>
            <person name="Igboeli O."/>
            <person name="Petrosino J."/>
            <person name="Tirumalai M."/>
            <person name="Uzman A."/>
            <person name="Fox G.E."/>
            <person name="Cardenas A.M."/>
            <person name="Muzny D.M."/>
            <person name="Hemphill L."/>
            <person name="Ding Y."/>
            <person name="Dugan S."/>
            <person name="Blyth P.R."/>
            <person name="Buhay C.J."/>
            <person name="Dinh H.H."/>
            <person name="Hawes A.C."/>
            <person name="Holder M."/>
            <person name="Kovar C.L."/>
            <person name="Lee S.L."/>
            <person name="Liu W."/>
            <person name="Nazareth L.V."/>
            <person name="Wang Q."/>
            <person name="Zhou J."/>
            <person name="Kaplan S.L."/>
            <person name="Weinstock G.M."/>
        </authorList>
    </citation>
    <scope>NUCLEOTIDE SEQUENCE [LARGE SCALE GENOMIC DNA]</scope>
    <source>
        <strain>USA300 / TCH1516</strain>
    </source>
</reference>
<proteinExistence type="inferred from homology"/>
<comment type="function">
    <text evidence="1">Catalyzes oxygen-dependent 5-hydroxyuridine (ho5U) modification at position 34 in tRNAs.</text>
</comment>
<comment type="catalytic activity">
    <reaction evidence="1">
        <text>uridine(34) in tRNA + AH2 + O2 = 5-hydroxyuridine(34) in tRNA + A + H2O</text>
        <dbReference type="Rhea" id="RHEA:64224"/>
        <dbReference type="Rhea" id="RHEA-COMP:11727"/>
        <dbReference type="Rhea" id="RHEA-COMP:13381"/>
        <dbReference type="ChEBI" id="CHEBI:13193"/>
        <dbReference type="ChEBI" id="CHEBI:15377"/>
        <dbReference type="ChEBI" id="CHEBI:15379"/>
        <dbReference type="ChEBI" id="CHEBI:17499"/>
        <dbReference type="ChEBI" id="CHEBI:65315"/>
        <dbReference type="ChEBI" id="CHEBI:136877"/>
    </reaction>
</comment>
<comment type="similarity">
    <text evidence="1">Belongs to the TrhO family.</text>
</comment>
<dbReference type="EC" id="1.14.-.-" evidence="1"/>
<dbReference type="EMBL" id="CP000730">
    <property type="protein sequence ID" value="ABX30677.1"/>
    <property type="molecule type" value="Genomic_DNA"/>
</dbReference>
<dbReference type="RefSeq" id="WP_001109273.1">
    <property type="nucleotide sequence ID" value="NC_010079.1"/>
</dbReference>
<dbReference type="SMR" id="A8Z5J0"/>
<dbReference type="KEGG" id="sax:USA300HOU_2691"/>
<dbReference type="HOGENOM" id="CLU_038878_1_0_9"/>
<dbReference type="BioCyc" id="SAUR451516-HMP:GTV5-2780-MONOMER"/>
<dbReference type="GO" id="GO:0016705">
    <property type="term" value="F:oxidoreductase activity, acting on paired donors, with incorporation or reduction of molecular oxygen"/>
    <property type="evidence" value="ECO:0007669"/>
    <property type="project" value="UniProtKB-UniRule"/>
</dbReference>
<dbReference type="GO" id="GO:0006400">
    <property type="term" value="P:tRNA modification"/>
    <property type="evidence" value="ECO:0007669"/>
    <property type="project" value="UniProtKB-UniRule"/>
</dbReference>
<dbReference type="CDD" id="cd01518">
    <property type="entry name" value="RHOD_YceA"/>
    <property type="match status" value="1"/>
</dbReference>
<dbReference type="Gene3D" id="3.30.70.100">
    <property type="match status" value="1"/>
</dbReference>
<dbReference type="Gene3D" id="3.40.250.10">
    <property type="entry name" value="Rhodanese-like domain"/>
    <property type="match status" value="1"/>
</dbReference>
<dbReference type="HAMAP" id="MF_00469">
    <property type="entry name" value="TrhO"/>
    <property type="match status" value="1"/>
</dbReference>
<dbReference type="InterPro" id="IPR001763">
    <property type="entry name" value="Rhodanese-like_dom"/>
</dbReference>
<dbReference type="InterPro" id="IPR036873">
    <property type="entry name" value="Rhodanese-like_dom_sf"/>
</dbReference>
<dbReference type="InterPro" id="IPR022111">
    <property type="entry name" value="Rhodanese_C"/>
</dbReference>
<dbReference type="InterPro" id="IPR020936">
    <property type="entry name" value="TrhO"/>
</dbReference>
<dbReference type="InterPro" id="IPR040503">
    <property type="entry name" value="TRHO_N"/>
</dbReference>
<dbReference type="NCBIfam" id="NF001135">
    <property type="entry name" value="PRK00142.1-3"/>
    <property type="match status" value="1"/>
</dbReference>
<dbReference type="PANTHER" id="PTHR43268:SF3">
    <property type="entry name" value="RHODANESE-LIKE DOMAIN-CONTAINING PROTEIN 7-RELATED"/>
    <property type="match status" value="1"/>
</dbReference>
<dbReference type="PANTHER" id="PTHR43268">
    <property type="entry name" value="THIOSULFATE SULFURTRANSFERASE/RHODANESE-LIKE DOMAIN-CONTAINING PROTEIN 2"/>
    <property type="match status" value="1"/>
</dbReference>
<dbReference type="Pfam" id="PF00581">
    <property type="entry name" value="Rhodanese"/>
    <property type="match status" value="1"/>
</dbReference>
<dbReference type="Pfam" id="PF12368">
    <property type="entry name" value="Rhodanese_C"/>
    <property type="match status" value="1"/>
</dbReference>
<dbReference type="Pfam" id="PF17773">
    <property type="entry name" value="UPF0176_N"/>
    <property type="match status" value="1"/>
</dbReference>
<dbReference type="SMART" id="SM00450">
    <property type="entry name" value="RHOD"/>
    <property type="match status" value="1"/>
</dbReference>
<dbReference type="SUPFAM" id="SSF52821">
    <property type="entry name" value="Rhodanese/Cell cycle control phosphatase"/>
    <property type="match status" value="1"/>
</dbReference>
<dbReference type="PROSITE" id="PS50206">
    <property type="entry name" value="RHODANESE_3"/>
    <property type="match status" value="1"/>
</dbReference>
<sequence>MNYQVLLYYKYMTIDDPEQFAQDHLAFCKAHHLKGRILVSTEGINGTLSGTKEETEQYMAHMHADERFKDMVFKIDEAEGHAFKKMHVRPRKEIVALDLEDDVDPRHTTGQYLSPVEFRKALEDDDTVIIDARNDYEFDLGHFRGAIRPNITRFRDLPDWIKENKALFADKKVVTYCTGGIRCEKFSGWLLKEGFEDVAQLHGGIATYGKDPETKGEYWDGKMYVFDDRISVDINQVEKTIIGKDWFDGKPCERYINCANPECNKQILVSEENETKYLGACSYECAKHERNRYVQANNISDNEWQQRLTNFDDLHQHA</sequence>
<evidence type="ECO:0000255" key="1">
    <source>
        <dbReference type="HAMAP-Rule" id="MF_00469"/>
    </source>
</evidence>
<keyword id="KW-0560">Oxidoreductase</keyword>
<keyword id="KW-0819">tRNA processing</keyword>
<name>TRHO_STAAT</name>
<feature type="chain" id="PRO_1000081201" description="tRNA uridine(34) hydroxylase">
    <location>
        <begin position="1"/>
        <end position="318"/>
    </location>
</feature>
<feature type="domain" description="Rhodanese" evidence="1">
    <location>
        <begin position="123"/>
        <end position="217"/>
    </location>
</feature>
<feature type="active site" description="Cysteine persulfide intermediate" evidence="1">
    <location>
        <position position="177"/>
    </location>
</feature>